<feature type="chain" id="PRO_1000009762" description="dCTP deaminase, dUMP-forming">
    <location>
        <begin position="1"/>
        <end position="190"/>
    </location>
</feature>
<feature type="region of interest" description="Disordered" evidence="2">
    <location>
        <begin position="162"/>
        <end position="184"/>
    </location>
</feature>
<feature type="compositionally biased region" description="Polar residues" evidence="2">
    <location>
        <begin position="171"/>
        <end position="184"/>
    </location>
</feature>
<feature type="active site" description="Proton donor/acceptor" evidence="1">
    <location>
        <position position="129"/>
    </location>
</feature>
<feature type="binding site" evidence="1">
    <location>
        <begin position="101"/>
        <end position="106"/>
    </location>
    <ligand>
        <name>dCTP</name>
        <dbReference type="ChEBI" id="CHEBI:61481"/>
    </ligand>
</feature>
<feature type="binding site" evidence="1">
    <location>
        <position position="119"/>
    </location>
    <ligand>
        <name>dCTP</name>
        <dbReference type="ChEBI" id="CHEBI:61481"/>
    </ligand>
</feature>
<feature type="binding site" evidence="1">
    <location>
        <begin position="127"/>
        <end position="129"/>
    </location>
    <ligand>
        <name>dCTP</name>
        <dbReference type="ChEBI" id="CHEBI:61481"/>
    </ligand>
</feature>
<feature type="binding site" evidence="1">
    <location>
        <position position="148"/>
    </location>
    <ligand>
        <name>dCTP</name>
        <dbReference type="ChEBI" id="CHEBI:61481"/>
    </ligand>
</feature>
<feature type="binding site" evidence="1">
    <location>
        <position position="162"/>
    </location>
    <ligand>
        <name>dCTP</name>
        <dbReference type="ChEBI" id="CHEBI:61481"/>
    </ligand>
</feature>
<feature type="binding site" evidence="1">
    <location>
        <position position="174"/>
    </location>
    <ligand>
        <name>dCTP</name>
        <dbReference type="ChEBI" id="CHEBI:61481"/>
    </ligand>
</feature>
<feature type="site" description="Important for bifunctional activity" evidence="1">
    <location>
        <begin position="116"/>
        <end position="117"/>
    </location>
</feature>
<protein>
    <recommendedName>
        <fullName evidence="1">dCTP deaminase, dUMP-forming</fullName>
        <ecNumber evidence="1">3.5.4.30</ecNumber>
    </recommendedName>
    <alternativeName>
        <fullName evidence="1">Bifunctional dCTP deaminase:dUTPase</fullName>
    </alternativeName>
    <alternativeName>
        <fullName evidence="1">DCD-DUT</fullName>
    </alternativeName>
</protein>
<organism>
    <name type="scientific">Mycobacterium sp. (strain MCS)</name>
    <dbReference type="NCBI Taxonomy" id="164756"/>
    <lineage>
        <taxon>Bacteria</taxon>
        <taxon>Bacillati</taxon>
        <taxon>Actinomycetota</taxon>
        <taxon>Actinomycetes</taxon>
        <taxon>Mycobacteriales</taxon>
        <taxon>Mycobacteriaceae</taxon>
        <taxon>Mycobacterium</taxon>
    </lineage>
</organism>
<sequence length="190" mass="20715">MLLSDRDIRAEIDAGRLGIDPFEDSLVQPSSVDVRLDTLFRVFNNTRYTHIDPAKQQDELTSLVEPSPGEPFVLHPGEFVLGSTLETCTLPDDLAGRLEGKSSLGRLGLLTHSTAGFIDPGFSGHITLELSNVANLPITLWPGMKIGQLCLLRLTSPAEHPYGSAKVGSKYQGQRGPTPSRSYQNFIKLS</sequence>
<comment type="function">
    <text evidence="1">Bifunctional enzyme that catalyzes both the deamination of dCTP to dUTP and the hydrolysis of dUTP to dUMP without releasing the toxic dUTP intermediate.</text>
</comment>
<comment type="catalytic activity">
    <reaction evidence="1">
        <text>dCTP + 2 H2O = dUMP + NH4(+) + diphosphate</text>
        <dbReference type="Rhea" id="RHEA:19205"/>
        <dbReference type="ChEBI" id="CHEBI:15377"/>
        <dbReference type="ChEBI" id="CHEBI:28938"/>
        <dbReference type="ChEBI" id="CHEBI:33019"/>
        <dbReference type="ChEBI" id="CHEBI:61481"/>
        <dbReference type="ChEBI" id="CHEBI:246422"/>
        <dbReference type="EC" id="3.5.4.30"/>
    </reaction>
</comment>
<comment type="pathway">
    <text evidence="1">Pyrimidine metabolism; dUMP biosynthesis; dUMP from dCTP: step 1/1.</text>
</comment>
<comment type="subunit">
    <text evidence="1">Homotrimer.</text>
</comment>
<comment type="similarity">
    <text evidence="1">Belongs to the dCTP deaminase family.</text>
</comment>
<proteinExistence type="inferred from homology"/>
<dbReference type="EC" id="3.5.4.30" evidence="1"/>
<dbReference type="EMBL" id="CP000384">
    <property type="protein sequence ID" value="ABG06551.1"/>
    <property type="molecule type" value="Genomic_DNA"/>
</dbReference>
<dbReference type="SMR" id="Q1BEY3"/>
<dbReference type="KEGG" id="mmc:Mmcs_0430"/>
<dbReference type="HOGENOM" id="CLU_087476_2_1_11"/>
<dbReference type="BioCyc" id="MSP164756:G1G6O-439-MONOMER"/>
<dbReference type="UniPathway" id="UPA00610">
    <property type="reaction ID" value="UER00667"/>
</dbReference>
<dbReference type="GO" id="GO:0033973">
    <property type="term" value="F:dCTP deaminase (dUMP-forming) activity"/>
    <property type="evidence" value="ECO:0007669"/>
    <property type="project" value="UniProtKB-UniRule"/>
</dbReference>
<dbReference type="GO" id="GO:0008829">
    <property type="term" value="F:dCTP deaminase activity"/>
    <property type="evidence" value="ECO:0007669"/>
    <property type="project" value="InterPro"/>
</dbReference>
<dbReference type="GO" id="GO:0000166">
    <property type="term" value="F:nucleotide binding"/>
    <property type="evidence" value="ECO:0007669"/>
    <property type="project" value="UniProtKB-KW"/>
</dbReference>
<dbReference type="GO" id="GO:0006226">
    <property type="term" value="P:dUMP biosynthetic process"/>
    <property type="evidence" value="ECO:0007669"/>
    <property type="project" value="UniProtKB-UniRule"/>
</dbReference>
<dbReference type="GO" id="GO:0006229">
    <property type="term" value="P:dUTP biosynthetic process"/>
    <property type="evidence" value="ECO:0007669"/>
    <property type="project" value="InterPro"/>
</dbReference>
<dbReference type="GO" id="GO:0015949">
    <property type="term" value="P:nucleobase-containing small molecule interconversion"/>
    <property type="evidence" value="ECO:0007669"/>
    <property type="project" value="TreeGrafter"/>
</dbReference>
<dbReference type="CDD" id="cd07557">
    <property type="entry name" value="trimeric_dUTPase"/>
    <property type="match status" value="1"/>
</dbReference>
<dbReference type="FunFam" id="2.70.40.10:FF:000005">
    <property type="entry name" value="dCTP deaminase, dUMP-forming"/>
    <property type="match status" value="1"/>
</dbReference>
<dbReference type="Gene3D" id="2.70.40.10">
    <property type="match status" value="1"/>
</dbReference>
<dbReference type="HAMAP" id="MF_00146">
    <property type="entry name" value="dCTP_deaminase"/>
    <property type="match status" value="1"/>
</dbReference>
<dbReference type="InterPro" id="IPR011962">
    <property type="entry name" value="dCTP_deaminase"/>
</dbReference>
<dbReference type="InterPro" id="IPR036157">
    <property type="entry name" value="dUTPase-like_sf"/>
</dbReference>
<dbReference type="InterPro" id="IPR033704">
    <property type="entry name" value="dUTPase_trimeric"/>
</dbReference>
<dbReference type="NCBIfam" id="TIGR02274">
    <property type="entry name" value="dCTP_deam"/>
    <property type="match status" value="1"/>
</dbReference>
<dbReference type="PANTHER" id="PTHR42680">
    <property type="entry name" value="DCTP DEAMINASE"/>
    <property type="match status" value="1"/>
</dbReference>
<dbReference type="PANTHER" id="PTHR42680:SF3">
    <property type="entry name" value="DCTP DEAMINASE"/>
    <property type="match status" value="1"/>
</dbReference>
<dbReference type="Pfam" id="PF22769">
    <property type="entry name" value="DCD"/>
    <property type="match status" value="1"/>
</dbReference>
<dbReference type="SUPFAM" id="SSF51283">
    <property type="entry name" value="dUTPase-like"/>
    <property type="match status" value="1"/>
</dbReference>
<keyword id="KW-0378">Hydrolase</keyword>
<keyword id="KW-0546">Nucleotide metabolism</keyword>
<keyword id="KW-0547">Nucleotide-binding</keyword>
<evidence type="ECO:0000255" key="1">
    <source>
        <dbReference type="HAMAP-Rule" id="MF_00146"/>
    </source>
</evidence>
<evidence type="ECO:0000256" key="2">
    <source>
        <dbReference type="SAM" id="MobiDB-lite"/>
    </source>
</evidence>
<gene>
    <name evidence="1" type="primary">dcd</name>
    <name type="ordered locus">Mmcs_0430</name>
</gene>
<accession>Q1BEY3</accession>
<name>DCDB_MYCSS</name>
<reference key="1">
    <citation type="submission" date="2006-06" db="EMBL/GenBank/DDBJ databases">
        <title>Complete sequence of chromosome of Mycobacterium sp. MCS.</title>
        <authorList>
            <consortium name="US DOE Joint Genome Institute"/>
            <person name="Copeland A."/>
            <person name="Lucas S."/>
            <person name="Lapidus A."/>
            <person name="Barry K."/>
            <person name="Detter J.C."/>
            <person name="Glavina del Rio T."/>
            <person name="Hammon N."/>
            <person name="Israni S."/>
            <person name="Dalin E."/>
            <person name="Tice H."/>
            <person name="Pitluck S."/>
            <person name="Martinez M."/>
            <person name="Schmutz J."/>
            <person name="Larimer F."/>
            <person name="Land M."/>
            <person name="Hauser L."/>
            <person name="Kyrpides N."/>
            <person name="Kim E."/>
            <person name="Miller C.D."/>
            <person name="Hughes J.E."/>
            <person name="Anderson A.J."/>
            <person name="Sims R.C."/>
            <person name="Richardson P."/>
        </authorList>
    </citation>
    <scope>NUCLEOTIDE SEQUENCE [LARGE SCALE GENOMIC DNA]</scope>
    <source>
        <strain>MCS</strain>
    </source>
</reference>